<dbReference type="EMBL" id="U18466">
    <property type="protein sequence ID" value="AAA65237.1"/>
    <property type="molecule type" value="Genomic_DNA"/>
</dbReference>
<dbReference type="EMBL" id="U18466">
    <property type="protein sequence ID" value="AAA65385.1"/>
    <property type="molecule type" value="Genomic_DNA"/>
</dbReference>
<dbReference type="RefSeq" id="NP_042701.1">
    <property type="nucleotide sequence ID" value="NC_001659.2"/>
</dbReference>
<dbReference type="RefSeq" id="NP_042849.1">
    <property type="nucleotide sequence ID" value="NC_001659.2"/>
</dbReference>
<dbReference type="GeneID" id="22220385"/>
<dbReference type="GeneID" id="22220391"/>
<dbReference type="KEGG" id="vg:22220385"/>
<dbReference type="KEGG" id="vg:22220391"/>
<dbReference type="Proteomes" id="UP000000624">
    <property type="component" value="Segment"/>
</dbReference>
<dbReference type="GO" id="GO:0033644">
    <property type="term" value="C:host cell membrane"/>
    <property type="evidence" value="ECO:0007669"/>
    <property type="project" value="UniProtKB-SubCell"/>
</dbReference>
<dbReference type="GO" id="GO:0016020">
    <property type="term" value="C:membrane"/>
    <property type="evidence" value="ECO:0007669"/>
    <property type="project" value="UniProtKB-KW"/>
</dbReference>
<proteinExistence type="inferred from homology"/>
<keyword id="KW-0024">Alternative initiation</keyword>
<keyword id="KW-0325">Glycoprotein</keyword>
<keyword id="KW-1043">Host membrane</keyword>
<keyword id="KW-0472">Membrane</keyword>
<keyword id="KW-1185">Reference proteome</keyword>
<keyword id="KW-0812">Transmembrane</keyword>
<keyword id="KW-1133">Transmembrane helix</keyword>
<sequence length="93" mass="10613">MFFFGIFRCNMDHWTTKRQVYIYLCFSLMTIALICYLIHICCHTKKNVVTNALPSNNMALIPYTPSNNMALIPYTPSNNTVPPPYTISGSCPQ</sequence>
<accession>Q89829</accession>
<feature type="chain" id="PRO_0000373749" description="Uncharacterized membrane protein KP93L/DP93R">
    <location>
        <begin position="1"/>
        <end position="93"/>
    </location>
</feature>
<feature type="transmembrane region" description="Helical" evidence="1">
    <location>
        <begin position="20"/>
        <end position="40"/>
    </location>
</feature>
<feature type="glycosylation site" description="N-linked (GlcNAc...) asparagine; by host" evidence="1">
    <location>
        <position position="78"/>
    </location>
</feature>
<feature type="splice variant" id="VSP_061335" description="In isoform 2." evidence="2">
    <location>
        <begin position="1"/>
        <end position="10"/>
    </location>
</feature>
<gene>
    <name type="ordered locus">BA71V-159</name>
    <name type="ORF">DP93R</name>
</gene>
<gene>
    <name type="ordered locus">BA71V-002</name>
    <name type="ORF">KP93L</name>
</gene>
<comment type="subcellular location">
    <subcellularLocation>
        <location evidence="3">Host membrane</location>
        <topology evidence="3">Single-pass membrane protein</topology>
    </subcellularLocation>
</comment>
<comment type="alternative products">
    <event type="alternative initiation"/>
    <isoform>
        <id>Q89829-1</id>
        <name>1</name>
        <sequence type="displayed"/>
    </isoform>
    <isoform>
        <id>Q89829-2</id>
        <name>2</name>
        <sequence type="described" ref="VSP_061335"/>
    </isoform>
</comment>
<comment type="miscellaneous">
    <text>Encoded by inverted terminal repeats (ITR) sequences.</text>
</comment>
<comment type="similarity">
    <text evidence="3">Belongs to the asfivirus KP93L family.</text>
</comment>
<name>VF93L_ASFB7</name>
<organismHost>
    <name type="scientific">Ornithodoros</name>
    <name type="common">relapsing fever ticks</name>
    <dbReference type="NCBI Taxonomy" id="6937"/>
</organismHost>
<organismHost>
    <name type="scientific">Sus scrofa</name>
    <name type="common">Pig</name>
    <dbReference type="NCBI Taxonomy" id="9823"/>
</organismHost>
<protein>
    <recommendedName>
        <fullName>Uncharacterized membrane protein KP93L/DP93R</fullName>
    </recommendedName>
</protein>
<evidence type="ECO:0000255" key="1"/>
<evidence type="ECO:0000269" key="2">
    <source>
    </source>
</evidence>
<evidence type="ECO:0000305" key="3"/>
<reference key="1">
    <citation type="journal article" date="1995" name="Virology">
        <title>Analysis of the complete nucleotide sequence of African swine fever virus.</title>
        <authorList>
            <person name="Yanez R.J."/>
            <person name="Rodriguez J.M."/>
            <person name="Nogal M.L."/>
            <person name="Yuste L."/>
            <person name="Enriquez C."/>
            <person name="Rodriguez J.F."/>
            <person name="Vinuela E."/>
        </authorList>
    </citation>
    <scope>NUCLEOTIDE SEQUENCE [LARGE SCALE GENOMIC DNA]</scope>
</reference>
<reference key="2">
    <citation type="journal article" date="2020" name="J. Virol.">
        <title>The African Swine Fever Virus Transcriptome.</title>
        <authorList>
            <person name="Cackett G."/>
            <person name="Matelska D."/>
            <person name="Sykora M."/>
            <person name="Portugal R."/>
            <person name="Malecki M."/>
            <person name="Baehler J."/>
            <person name="Dixon L."/>
            <person name="Werner F."/>
        </authorList>
    </citation>
    <scope>ALTERNATIVE INITIATION</scope>
</reference>
<organism>
    <name type="scientific">African swine fever virus (strain Badajoz 1971 Vero-adapted)</name>
    <name type="common">Ba71V</name>
    <name type="synonym">ASFV</name>
    <dbReference type="NCBI Taxonomy" id="10498"/>
    <lineage>
        <taxon>Viruses</taxon>
        <taxon>Varidnaviria</taxon>
        <taxon>Bamfordvirae</taxon>
        <taxon>Nucleocytoviricota</taxon>
        <taxon>Pokkesviricetes</taxon>
        <taxon>Asfuvirales</taxon>
        <taxon>Asfarviridae</taxon>
        <taxon>Asfivirus</taxon>
        <taxon>African swine fever virus</taxon>
    </lineage>
</organism>